<accession>B9JGH5</accession>
<sequence>MRVYYDRDADLNLIKSKKVAIIGYGSQGRAHALNLKDSGAQNVVIALKAGSPTVKKAEADGFKVMTVAEAAGWADLMMMATPDELQADIYKADIAPNIRDGAAIAFAHGLNVHFGLIEPKASVDVVMIAPKGPGHTVRGEYQKGGGVPCLVAVHQNASGNALELALSYACGVGGGRSGIIETNFREECETDLFGEQVVLCGGLVELIRAGFETLVEAGYAPEMAYFECLHEVKLIVDLIYEGGIANMNYSISNTAEWGEYVTGPRIITEETKAEMKRVLKDIQTGKFTSDWMQEYRSGAARFKGIRRMNDSHQIEEVGAKLRGMMPWIGKNKLVDKSVN</sequence>
<protein>
    <recommendedName>
        <fullName evidence="1">Ketol-acid reductoisomerase (NADP(+))</fullName>
        <shortName evidence="1">KARI</shortName>
        <ecNumber evidence="1">1.1.1.86</ecNumber>
    </recommendedName>
    <alternativeName>
        <fullName evidence="1">Acetohydroxy-acid isomeroreductase</fullName>
        <shortName evidence="1">AHIR</shortName>
    </alternativeName>
    <alternativeName>
        <fullName evidence="1">Alpha-keto-beta-hydroxylacyl reductoisomerase</fullName>
    </alternativeName>
    <alternativeName>
        <fullName evidence="1">Ketol-acid reductoisomerase type 1</fullName>
    </alternativeName>
    <alternativeName>
        <fullName evidence="1">Ketol-acid reductoisomerase type I</fullName>
    </alternativeName>
</protein>
<reference key="1">
    <citation type="journal article" date="2009" name="J. Bacteriol.">
        <title>Genome sequences of three Agrobacterium biovars help elucidate the evolution of multichromosome genomes in bacteria.</title>
        <authorList>
            <person name="Slater S.C."/>
            <person name="Goldman B.S."/>
            <person name="Goodner B."/>
            <person name="Setubal J.C."/>
            <person name="Farrand S.K."/>
            <person name="Nester E.W."/>
            <person name="Burr T.J."/>
            <person name="Banta L."/>
            <person name="Dickerman A.W."/>
            <person name="Paulsen I."/>
            <person name="Otten L."/>
            <person name="Suen G."/>
            <person name="Welch R."/>
            <person name="Almeida N.F."/>
            <person name="Arnold F."/>
            <person name="Burton O.T."/>
            <person name="Du Z."/>
            <person name="Ewing A."/>
            <person name="Godsy E."/>
            <person name="Heisel S."/>
            <person name="Houmiel K.L."/>
            <person name="Jhaveri J."/>
            <person name="Lu J."/>
            <person name="Miller N.M."/>
            <person name="Norton S."/>
            <person name="Chen Q."/>
            <person name="Phoolcharoen W."/>
            <person name="Ohlin V."/>
            <person name="Ondrusek D."/>
            <person name="Pride N."/>
            <person name="Stricklin S.L."/>
            <person name="Sun J."/>
            <person name="Wheeler C."/>
            <person name="Wilson L."/>
            <person name="Zhu H."/>
            <person name="Wood D.W."/>
        </authorList>
    </citation>
    <scope>NUCLEOTIDE SEQUENCE [LARGE SCALE GENOMIC DNA]</scope>
    <source>
        <strain>K84 / ATCC BAA-868</strain>
    </source>
</reference>
<keyword id="KW-0028">Amino-acid biosynthesis</keyword>
<keyword id="KW-0100">Branched-chain amino acid biosynthesis</keyword>
<keyword id="KW-0460">Magnesium</keyword>
<keyword id="KW-0479">Metal-binding</keyword>
<keyword id="KW-0521">NADP</keyword>
<keyword id="KW-0560">Oxidoreductase</keyword>
<evidence type="ECO:0000255" key="1">
    <source>
        <dbReference type="HAMAP-Rule" id="MF_00435"/>
    </source>
</evidence>
<evidence type="ECO:0000255" key="2">
    <source>
        <dbReference type="PROSITE-ProRule" id="PRU01197"/>
    </source>
</evidence>
<evidence type="ECO:0000255" key="3">
    <source>
        <dbReference type="PROSITE-ProRule" id="PRU01198"/>
    </source>
</evidence>
<organism>
    <name type="scientific">Rhizobium rhizogenes (strain K84 / ATCC BAA-868)</name>
    <name type="common">Agrobacterium radiobacter</name>
    <dbReference type="NCBI Taxonomy" id="311403"/>
    <lineage>
        <taxon>Bacteria</taxon>
        <taxon>Pseudomonadati</taxon>
        <taxon>Pseudomonadota</taxon>
        <taxon>Alphaproteobacteria</taxon>
        <taxon>Hyphomicrobiales</taxon>
        <taxon>Rhizobiaceae</taxon>
        <taxon>Rhizobium/Agrobacterium group</taxon>
        <taxon>Rhizobium</taxon>
    </lineage>
</organism>
<feature type="chain" id="PRO_1000190899" description="Ketol-acid reductoisomerase (NADP(+))">
    <location>
        <begin position="1"/>
        <end position="339"/>
    </location>
</feature>
<feature type="domain" description="KARI N-terminal Rossmann" evidence="2">
    <location>
        <begin position="1"/>
        <end position="182"/>
    </location>
</feature>
<feature type="domain" description="KARI C-terminal knotted" evidence="3">
    <location>
        <begin position="183"/>
        <end position="328"/>
    </location>
</feature>
<feature type="active site" evidence="1">
    <location>
        <position position="108"/>
    </location>
</feature>
<feature type="binding site" evidence="1">
    <location>
        <begin position="24"/>
        <end position="27"/>
    </location>
    <ligand>
        <name>NADP(+)</name>
        <dbReference type="ChEBI" id="CHEBI:58349"/>
    </ligand>
</feature>
<feature type="binding site" evidence="1">
    <location>
        <position position="48"/>
    </location>
    <ligand>
        <name>NADP(+)</name>
        <dbReference type="ChEBI" id="CHEBI:58349"/>
    </ligand>
</feature>
<feature type="binding site" evidence="1">
    <location>
        <position position="51"/>
    </location>
    <ligand>
        <name>NADP(+)</name>
        <dbReference type="ChEBI" id="CHEBI:58349"/>
    </ligand>
</feature>
<feature type="binding site" evidence="1">
    <location>
        <position position="53"/>
    </location>
    <ligand>
        <name>NADP(+)</name>
        <dbReference type="ChEBI" id="CHEBI:58349"/>
    </ligand>
</feature>
<feature type="binding site" evidence="1">
    <location>
        <begin position="83"/>
        <end position="86"/>
    </location>
    <ligand>
        <name>NADP(+)</name>
        <dbReference type="ChEBI" id="CHEBI:58349"/>
    </ligand>
</feature>
<feature type="binding site" evidence="1">
    <location>
        <position position="134"/>
    </location>
    <ligand>
        <name>NADP(+)</name>
        <dbReference type="ChEBI" id="CHEBI:58349"/>
    </ligand>
</feature>
<feature type="binding site" evidence="1">
    <location>
        <position position="191"/>
    </location>
    <ligand>
        <name>Mg(2+)</name>
        <dbReference type="ChEBI" id="CHEBI:18420"/>
        <label>1</label>
    </ligand>
</feature>
<feature type="binding site" evidence="1">
    <location>
        <position position="191"/>
    </location>
    <ligand>
        <name>Mg(2+)</name>
        <dbReference type="ChEBI" id="CHEBI:18420"/>
        <label>2</label>
    </ligand>
</feature>
<feature type="binding site" evidence="1">
    <location>
        <position position="195"/>
    </location>
    <ligand>
        <name>Mg(2+)</name>
        <dbReference type="ChEBI" id="CHEBI:18420"/>
        <label>1</label>
    </ligand>
</feature>
<feature type="binding site" evidence="1">
    <location>
        <position position="227"/>
    </location>
    <ligand>
        <name>Mg(2+)</name>
        <dbReference type="ChEBI" id="CHEBI:18420"/>
        <label>2</label>
    </ligand>
</feature>
<feature type="binding site" evidence="1">
    <location>
        <position position="231"/>
    </location>
    <ligand>
        <name>Mg(2+)</name>
        <dbReference type="ChEBI" id="CHEBI:18420"/>
        <label>2</label>
    </ligand>
</feature>
<feature type="binding site" evidence="1">
    <location>
        <position position="252"/>
    </location>
    <ligand>
        <name>substrate</name>
    </ligand>
</feature>
<gene>
    <name evidence="1" type="primary">ilvC</name>
    <name type="ordered locus">Arad_2866</name>
</gene>
<name>ILVC_RHIR8</name>
<dbReference type="EC" id="1.1.1.86" evidence="1"/>
<dbReference type="EMBL" id="CP000628">
    <property type="protein sequence ID" value="ACM26949.1"/>
    <property type="molecule type" value="Genomic_DNA"/>
</dbReference>
<dbReference type="RefSeq" id="WP_007696899.1">
    <property type="nucleotide sequence ID" value="NC_011985.1"/>
</dbReference>
<dbReference type="SMR" id="B9JGH5"/>
<dbReference type="STRING" id="311403.Arad_2866"/>
<dbReference type="GeneID" id="86848818"/>
<dbReference type="KEGG" id="ara:Arad_2866"/>
<dbReference type="eggNOG" id="COG0059">
    <property type="taxonomic scope" value="Bacteria"/>
</dbReference>
<dbReference type="HOGENOM" id="CLU_033821_0_1_5"/>
<dbReference type="UniPathway" id="UPA00047">
    <property type="reaction ID" value="UER00056"/>
</dbReference>
<dbReference type="UniPathway" id="UPA00049">
    <property type="reaction ID" value="UER00060"/>
</dbReference>
<dbReference type="Proteomes" id="UP000001600">
    <property type="component" value="Chromosome 1"/>
</dbReference>
<dbReference type="GO" id="GO:0005829">
    <property type="term" value="C:cytosol"/>
    <property type="evidence" value="ECO:0007669"/>
    <property type="project" value="TreeGrafter"/>
</dbReference>
<dbReference type="GO" id="GO:0004455">
    <property type="term" value="F:ketol-acid reductoisomerase activity"/>
    <property type="evidence" value="ECO:0007669"/>
    <property type="project" value="UniProtKB-UniRule"/>
</dbReference>
<dbReference type="GO" id="GO:0000287">
    <property type="term" value="F:magnesium ion binding"/>
    <property type="evidence" value="ECO:0007669"/>
    <property type="project" value="UniProtKB-UniRule"/>
</dbReference>
<dbReference type="GO" id="GO:0050661">
    <property type="term" value="F:NADP binding"/>
    <property type="evidence" value="ECO:0007669"/>
    <property type="project" value="InterPro"/>
</dbReference>
<dbReference type="GO" id="GO:0009097">
    <property type="term" value="P:isoleucine biosynthetic process"/>
    <property type="evidence" value="ECO:0007669"/>
    <property type="project" value="UniProtKB-UniRule"/>
</dbReference>
<dbReference type="GO" id="GO:0009099">
    <property type="term" value="P:L-valine biosynthetic process"/>
    <property type="evidence" value="ECO:0007669"/>
    <property type="project" value="UniProtKB-UniRule"/>
</dbReference>
<dbReference type="FunFam" id="3.40.50.720:FF:000023">
    <property type="entry name" value="Ketol-acid reductoisomerase (NADP(+))"/>
    <property type="match status" value="1"/>
</dbReference>
<dbReference type="Gene3D" id="6.10.240.10">
    <property type="match status" value="1"/>
</dbReference>
<dbReference type="Gene3D" id="3.40.50.720">
    <property type="entry name" value="NAD(P)-binding Rossmann-like Domain"/>
    <property type="match status" value="1"/>
</dbReference>
<dbReference type="HAMAP" id="MF_00435">
    <property type="entry name" value="IlvC"/>
    <property type="match status" value="1"/>
</dbReference>
<dbReference type="InterPro" id="IPR008927">
    <property type="entry name" value="6-PGluconate_DH-like_C_sf"/>
</dbReference>
<dbReference type="InterPro" id="IPR013023">
    <property type="entry name" value="KARI"/>
</dbReference>
<dbReference type="InterPro" id="IPR000506">
    <property type="entry name" value="KARI_C"/>
</dbReference>
<dbReference type="InterPro" id="IPR013116">
    <property type="entry name" value="KARI_N"/>
</dbReference>
<dbReference type="InterPro" id="IPR014359">
    <property type="entry name" value="KARI_prok"/>
</dbReference>
<dbReference type="InterPro" id="IPR036291">
    <property type="entry name" value="NAD(P)-bd_dom_sf"/>
</dbReference>
<dbReference type="NCBIfam" id="TIGR00465">
    <property type="entry name" value="ilvC"/>
    <property type="match status" value="1"/>
</dbReference>
<dbReference type="NCBIfam" id="NF004017">
    <property type="entry name" value="PRK05479.1"/>
    <property type="match status" value="1"/>
</dbReference>
<dbReference type="NCBIfam" id="NF009940">
    <property type="entry name" value="PRK13403.1"/>
    <property type="match status" value="1"/>
</dbReference>
<dbReference type="PANTHER" id="PTHR21371">
    <property type="entry name" value="KETOL-ACID REDUCTOISOMERASE, MITOCHONDRIAL"/>
    <property type="match status" value="1"/>
</dbReference>
<dbReference type="PANTHER" id="PTHR21371:SF1">
    <property type="entry name" value="KETOL-ACID REDUCTOISOMERASE, MITOCHONDRIAL"/>
    <property type="match status" value="1"/>
</dbReference>
<dbReference type="Pfam" id="PF01450">
    <property type="entry name" value="KARI_C"/>
    <property type="match status" value="1"/>
</dbReference>
<dbReference type="Pfam" id="PF07991">
    <property type="entry name" value="KARI_N"/>
    <property type="match status" value="1"/>
</dbReference>
<dbReference type="PIRSF" id="PIRSF000116">
    <property type="entry name" value="IlvC_gammaproteo"/>
    <property type="match status" value="1"/>
</dbReference>
<dbReference type="SUPFAM" id="SSF48179">
    <property type="entry name" value="6-phosphogluconate dehydrogenase C-terminal domain-like"/>
    <property type="match status" value="1"/>
</dbReference>
<dbReference type="SUPFAM" id="SSF51735">
    <property type="entry name" value="NAD(P)-binding Rossmann-fold domains"/>
    <property type="match status" value="1"/>
</dbReference>
<dbReference type="PROSITE" id="PS51851">
    <property type="entry name" value="KARI_C"/>
    <property type="match status" value="1"/>
</dbReference>
<dbReference type="PROSITE" id="PS51850">
    <property type="entry name" value="KARI_N"/>
    <property type="match status" value="1"/>
</dbReference>
<comment type="function">
    <text evidence="1">Involved in the biosynthesis of branched-chain amino acids (BCAA). Catalyzes an alkyl-migration followed by a ketol-acid reduction of (S)-2-acetolactate (S2AL) to yield (R)-2,3-dihydroxy-isovalerate. In the isomerase reaction, S2AL is rearranged via a Mg-dependent methyl migration to produce 3-hydroxy-3-methyl-2-ketobutyrate (HMKB). In the reductase reaction, this 2-ketoacid undergoes a metal-dependent reduction by NADPH to yield (R)-2,3-dihydroxy-isovalerate.</text>
</comment>
<comment type="catalytic activity">
    <reaction evidence="1">
        <text>(2R)-2,3-dihydroxy-3-methylbutanoate + NADP(+) = (2S)-2-acetolactate + NADPH + H(+)</text>
        <dbReference type="Rhea" id="RHEA:22068"/>
        <dbReference type="ChEBI" id="CHEBI:15378"/>
        <dbReference type="ChEBI" id="CHEBI:49072"/>
        <dbReference type="ChEBI" id="CHEBI:57783"/>
        <dbReference type="ChEBI" id="CHEBI:58349"/>
        <dbReference type="ChEBI" id="CHEBI:58476"/>
        <dbReference type="EC" id="1.1.1.86"/>
    </reaction>
</comment>
<comment type="catalytic activity">
    <reaction evidence="1">
        <text>(2R,3R)-2,3-dihydroxy-3-methylpentanoate + NADP(+) = (S)-2-ethyl-2-hydroxy-3-oxobutanoate + NADPH + H(+)</text>
        <dbReference type="Rhea" id="RHEA:13493"/>
        <dbReference type="ChEBI" id="CHEBI:15378"/>
        <dbReference type="ChEBI" id="CHEBI:49256"/>
        <dbReference type="ChEBI" id="CHEBI:49258"/>
        <dbReference type="ChEBI" id="CHEBI:57783"/>
        <dbReference type="ChEBI" id="CHEBI:58349"/>
        <dbReference type="EC" id="1.1.1.86"/>
    </reaction>
</comment>
<comment type="cofactor">
    <cofactor evidence="1">
        <name>Mg(2+)</name>
        <dbReference type="ChEBI" id="CHEBI:18420"/>
    </cofactor>
    <text evidence="1">Binds 2 magnesium ions per subunit.</text>
</comment>
<comment type="pathway">
    <text evidence="1">Amino-acid biosynthesis; L-isoleucine biosynthesis; L-isoleucine from 2-oxobutanoate: step 2/4.</text>
</comment>
<comment type="pathway">
    <text evidence="1">Amino-acid biosynthesis; L-valine biosynthesis; L-valine from pyruvate: step 2/4.</text>
</comment>
<comment type="similarity">
    <text evidence="1">Belongs to the ketol-acid reductoisomerase family.</text>
</comment>
<proteinExistence type="inferred from homology"/>